<gene>
    <name evidence="1" type="primary">atpC</name>
    <name type="ordered locus">PH1977</name>
</gene>
<keyword id="KW-0066">ATP synthesis</keyword>
<keyword id="KW-1003">Cell membrane</keyword>
<keyword id="KW-0375">Hydrogen ion transport</keyword>
<keyword id="KW-0406">Ion transport</keyword>
<keyword id="KW-0472">Membrane</keyword>
<keyword id="KW-0813">Transport</keyword>
<comment type="function">
    <text evidence="1">Component of the A-type ATP synthase that produces ATP from ADP in the presence of a proton gradient across the membrane.</text>
</comment>
<comment type="subunit">
    <text evidence="1">Has multiple subunits with at least A(3), B(3), C, D, E, F, H, I and proteolipid K(x).</text>
</comment>
<comment type="subcellular location">
    <subcellularLocation>
        <location evidence="1">Cell membrane</location>
        <topology evidence="1">Peripheral membrane protein</topology>
    </subcellularLocation>
</comment>
<comment type="similarity">
    <text evidence="1">Belongs to the V-ATPase V0D/AC39 subunit family.</text>
</comment>
<sequence>MEISTLTTILDTTLAVIFTWVAYKTGQIIWKYTPYSYPNARIRAMEARLLTDQRFSELAESKTLQNFVVSLEDTDYSPRLASLQSYNLYEIERALDLSLVDLVELMIKIMPKRIRGLFEILLEEWDVRNITNVIKAKLSNLPPQDFIIPAGRMFPKVKAMVESKTMEEILVILEGTEYEEPLRKLLLKEIDLQAFELELYKIYYSKLLKYASSRKGEEKLISEEFIKMLIDYRNISIILRAKLSGMPSEEIKSLLIPGGMLSRAVLESMLSSEDVMMALGELEGTRYGDALKDVREAVEGGRIDKVEEALRRYILNRMKELSQFYPLSVAVALTYLLERESEVRKLKAVAKLIEDKAKPEKIKELIGEMA</sequence>
<evidence type="ECO:0000255" key="1">
    <source>
        <dbReference type="HAMAP-Rule" id="MF_00314"/>
    </source>
</evidence>
<proteinExistence type="inferred from homology"/>
<protein>
    <recommendedName>
        <fullName evidence="1">A-type ATP synthase subunit C</fullName>
    </recommendedName>
</protein>
<name>AATC_PYRHO</name>
<feature type="chain" id="PRO_0000119371" description="A-type ATP synthase subunit C">
    <location>
        <begin position="1"/>
        <end position="370"/>
    </location>
</feature>
<reference key="1">
    <citation type="journal article" date="1998" name="DNA Res.">
        <title>Complete sequence and gene organization of the genome of a hyper-thermophilic archaebacterium, Pyrococcus horikoshii OT3.</title>
        <authorList>
            <person name="Kawarabayasi Y."/>
            <person name="Sawada M."/>
            <person name="Horikawa H."/>
            <person name="Haikawa Y."/>
            <person name="Hino Y."/>
            <person name="Yamamoto S."/>
            <person name="Sekine M."/>
            <person name="Baba S."/>
            <person name="Kosugi H."/>
            <person name="Hosoyama A."/>
            <person name="Nagai Y."/>
            <person name="Sakai M."/>
            <person name="Ogura K."/>
            <person name="Otsuka R."/>
            <person name="Nakazawa H."/>
            <person name="Takamiya M."/>
            <person name="Ohfuku Y."/>
            <person name="Funahashi T."/>
            <person name="Tanaka T."/>
            <person name="Kudoh Y."/>
            <person name="Yamazaki J."/>
            <person name="Kushida N."/>
            <person name="Oguchi A."/>
            <person name="Aoki K."/>
            <person name="Yoshizawa T."/>
            <person name="Nakamura Y."/>
            <person name="Robb F.T."/>
            <person name="Horikoshi K."/>
            <person name="Masuchi Y."/>
            <person name="Shizuya H."/>
            <person name="Kikuchi H."/>
        </authorList>
    </citation>
    <scope>NUCLEOTIDE SEQUENCE [LARGE SCALE GENOMIC DNA]</scope>
    <source>
        <strain>ATCC 700860 / DSM 12428 / JCM 9974 / NBRC 100139 / OT-3</strain>
    </source>
</reference>
<dbReference type="EMBL" id="BA000001">
    <property type="protein sequence ID" value="BAA31104.1"/>
    <property type="molecule type" value="Genomic_DNA"/>
</dbReference>
<dbReference type="PIR" id="A71214">
    <property type="entry name" value="A71214"/>
</dbReference>
<dbReference type="RefSeq" id="WP_010886041.1">
    <property type="nucleotide sequence ID" value="NC_000961.1"/>
</dbReference>
<dbReference type="SMR" id="O57726"/>
<dbReference type="STRING" id="70601.gene:9378990"/>
<dbReference type="EnsemblBacteria" id="BAA31104">
    <property type="protein sequence ID" value="BAA31104"/>
    <property type="gene ID" value="BAA31104"/>
</dbReference>
<dbReference type="GeneID" id="1442823"/>
<dbReference type="KEGG" id="pho:PH1977"/>
<dbReference type="eggNOG" id="arCOG02459">
    <property type="taxonomic scope" value="Archaea"/>
</dbReference>
<dbReference type="OrthoDB" id="4272at2157"/>
<dbReference type="Proteomes" id="UP000000752">
    <property type="component" value="Chromosome"/>
</dbReference>
<dbReference type="GO" id="GO:0005886">
    <property type="term" value="C:plasma membrane"/>
    <property type="evidence" value="ECO:0007669"/>
    <property type="project" value="UniProtKB-SubCell"/>
</dbReference>
<dbReference type="GO" id="GO:0033179">
    <property type="term" value="C:proton-transporting V-type ATPase, V0 domain"/>
    <property type="evidence" value="ECO:0007669"/>
    <property type="project" value="InterPro"/>
</dbReference>
<dbReference type="GO" id="GO:0005524">
    <property type="term" value="F:ATP binding"/>
    <property type="evidence" value="ECO:0007669"/>
    <property type="project" value="UniProtKB-UniRule"/>
</dbReference>
<dbReference type="GO" id="GO:0046933">
    <property type="term" value="F:proton-transporting ATP synthase activity, rotational mechanism"/>
    <property type="evidence" value="ECO:0007669"/>
    <property type="project" value="UniProtKB-UniRule"/>
</dbReference>
<dbReference type="GO" id="GO:0046961">
    <property type="term" value="F:proton-transporting ATPase activity, rotational mechanism"/>
    <property type="evidence" value="ECO:0007669"/>
    <property type="project" value="InterPro"/>
</dbReference>
<dbReference type="GO" id="GO:0042777">
    <property type="term" value="P:proton motive force-driven plasma membrane ATP synthesis"/>
    <property type="evidence" value="ECO:0007669"/>
    <property type="project" value="UniProtKB-UniRule"/>
</dbReference>
<dbReference type="Gene3D" id="1.10.132.50">
    <property type="entry name" value="ATP synthase (C/AC39) subunit, domain 3"/>
    <property type="match status" value="1"/>
</dbReference>
<dbReference type="Gene3D" id="1.20.1690.10">
    <property type="entry name" value="V-type ATP synthase subunit C domain"/>
    <property type="match status" value="2"/>
</dbReference>
<dbReference type="HAMAP" id="MF_00314">
    <property type="entry name" value="ATP_synth_C_arch"/>
    <property type="match status" value="1"/>
</dbReference>
<dbReference type="InterPro" id="IPR036079">
    <property type="entry name" value="ATPase_csu/dsu_sf"/>
</dbReference>
<dbReference type="InterPro" id="IPR014272">
    <property type="entry name" value="ATPase_V0-cplx_csu"/>
</dbReference>
<dbReference type="InterPro" id="IPR002843">
    <property type="entry name" value="ATPase_V0-cplx_csu/dsu"/>
</dbReference>
<dbReference type="InterPro" id="IPR050873">
    <property type="entry name" value="V-ATPase_V0D/AC39_subunit"/>
</dbReference>
<dbReference type="InterPro" id="IPR035067">
    <property type="entry name" value="V-type_ATPase_csu/dsu"/>
</dbReference>
<dbReference type="InterPro" id="IPR044911">
    <property type="entry name" value="V-type_ATPase_csu/dsu_dom_3"/>
</dbReference>
<dbReference type="NCBIfam" id="TIGR02923">
    <property type="entry name" value="AhaC"/>
    <property type="match status" value="1"/>
</dbReference>
<dbReference type="NCBIfam" id="NF002269">
    <property type="entry name" value="PRK01198.1-5"/>
    <property type="match status" value="1"/>
</dbReference>
<dbReference type="PANTHER" id="PTHR38682">
    <property type="entry name" value="V-TYPE ATP SYNTHASE SUBUNIT C"/>
    <property type="match status" value="1"/>
</dbReference>
<dbReference type="PANTHER" id="PTHR38682:SF1">
    <property type="entry name" value="V-TYPE ATP SYNTHASE SUBUNIT C"/>
    <property type="match status" value="1"/>
</dbReference>
<dbReference type="Pfam" id="PF01992">
    <property type="entry name" value="vATP-synt_AC39"/>
    <property type="match status" value="1"/>
</dbReference>
<dbReference type="SUPFAM" id="SSF103486">
    <property type="entry name" value="V-type ATP synthase subunit C"/>
    <property type="match status" value="1"/>
</dbReference>
<organism>
    <name type="scientific">Pyrococcus horikoshii (strain ATCC 700860 / DSM 12428 / JCM 9974 / NBRC 100139 / OT-3)</name>
    <dbReference type="NCBI Taxonomy" id="70601"/>
    <lineage>
        <taxon>Archaea</taxon>
        <taxon>Methanobacteriati</taxon>
        <taxon>Methanobacteriota</taxon>
        <taxon>Thermococci</taxon>
        <taxon>Thermococcales</taxon>
        <taxon>Thermococcaceae</taxon>
        <taxon>Pyrococcus</taxon>
    </lineage>
</organism>
<accession>O57726</accession>